<feature type="chain" id="PRO_0000122314" description="5-methylthioadenosine/S-adenosylhomocysteine deaminase">
    <location>
        <begin position="1"/>
        <end position="421"/>
    </location>
</feature>
<feature type="binding site" evidence="1">
    <location>
        <position position="60"/>
    </location>
    <ligand>
        <name>Zn(2+)</name>
        <dbReference type="ChEBI" id="CHEBI:29105"/>
    </ligand>
</feature>
<feature type="binding site" evidence="1">
    <location>
        <position position="62"/>
    </location>
    <ligand>
        <name>Zn(2+)</name>
        <dbReference type="ChEBI" id="CHEBI:29105"/>
    </ligand>
</feature>
<feature type="binding site" evidence="1">
    <location>
        <position position="89"/>
    </location>
    <ligand>
        <name>substrate</name>
    </ligand>
</feature>
<feature type="binding site" evidence="1">
    <location>
        <position position="181"/>
    </location>
    <ligand>
        <name>substrate</name>
    </ligand>
</feature>
<feature type="binding site" evidence="1">
    <location>
        <position position="208"/>
    </location>
    <ligand>
        <name>Zn(2+)</name>
        <dbReference type="ChEBI" id="CHEBI:29105"/>
    </ligand>
</feature>
<feature type="binding site" evidence="1">
    <location>
        <position position="211"/>
    </location>
    <ligand>
        <name>substrate</name>
    </ligand>
</feature>
<feature type="binding site" evidence="1">
    <location>
        <position position="296"/>
    </location>
    <ligand>
        <name>substrate</name>
    </ligand>
</feature>
<feature type="binding site" evidence="1">
    <location>
        <position position="296"/>
    </location>
    <ligand>
        <name>Zn(2+)</name>
        <dbReference type="ChEBI" id="CHEBI:29105"/>
    </ligand>
</feature>
<dbReference type="EC" id="3.5.4.28" evidence="1"/>
<dbReference type="EC" id="3.5.4.31" evidence="1"/>
<dbReference type="EMBL" id="BA000001">
    <property type="protein sequence ID" value="BAA30623.1"/>
    <property type="status" value="ALT_INIT"/>
    <property type="molecule type" value="Genomic_DNA"/>
</dbReference>
<dbReference type="PIR" id="G71027">
    <property type="entry name" value="G71027"/>
</dbReference>
<dbReference type="SMR" id="O59184"/>
<dbReference type="STRING" id="70601.gene:9378497"/>
<dbReference type="EnsemblBacteria" id="BAA30623">
    <property type="protein sequence ID" value="BAA30623"/>
    <property type="gene ID" value="BAA30623"/>
</dbReference>
<dbReference type="KEGG" id="pho:PH1515"/>
<dbReference type="eggNOG" id="arCOG00695">
    <property type="taxonomic scope" value="Archaea"/>
</dbReference>
<dbReference type="Proteomes" id="UP000000752">
    <property type="component" value="Chromosome"/>
</dbReference>
<dbReference type="GO" id="GO:0090614">
    <property type="term" value="F:5'-methylthioadenosine deaminase activity"/>
    <property type="evidence" value="ECO:0007669"/>
    <property type="project" value="UniProtKB-UniRule"/>
</dbReference>
<dbReference type="GO" id="GO:0046872">
    <property type="term" value="F:metal ion binding"/>
    <property type="evidence" value="ECO:0007669"/>
    <property type="project" value="UniProtKB-KW"/>
</dbReference>
<dbReference type="GO" id="GO:0050270">
    <property type="term" value="F:S-adenosylhomocysteine deaminase activity"/>
    <property type="evidence" value="ECO:0007669"/>
    <property type="project" value="UniProtKB-UniRule"/>
</dbReference>
<dbReference type="CDD" id="cd01298">
    <property type="entry name" value="ATZ_TRZ_like"/>
    <property type="match status" value="1"/>
</dbReference>
<dbReference type="FunFam" id="3.20.20.140:FF:000014">
    <property type="entry name" value="5-methylthioadenosine/S-adenosylhomocysteine deaminase"/>
    <property type="match status" value="1"/>
</dbReference>
<dbReference type="Gene3D" id="3.20.20.140">
    <property type="entry name" value="Metal-dependent hydrolases"/>
    <property type="match status" value="1"/>
</dbReference>
<dbReference type="Gene3D" id="2.30.40.10">
    <property type="entry name" value="Urease, subunit C, domain 1"/>
    <property type="match status" value="1"/>
</dbReference>
<dbReference type="HAMAP" id="MF_01281">
    <property type="entry name" value="MTA_SAH_deamin"/>
    <property type="match status" value="1"/>
</dbReference>
<dbReference type="InterPro" id="IPR006680">
    <property type="entry name" value="Amidohydro-rel"/>
</dbReference>
<dbReference type="InterPro" id="IPR023512">
    <property type="entry name" value="Deaminase_MtaD/DadD"/>
</dbReference>
<dbReference type="InterPro" id="IPR011059">
    <property type="entry name" value="Metal-dep_hydrolase_composite"/>
</dbReference>
<dbReference type="InterPro" id="IPR032466">
    <property type="entry name" value="Metal_Hydrolase"/>
</dbReference>
<dbReference type="InterPro" id="IPR050287">
    <property type="entry name" value="MTA/SAH_deaminase"/>
</dbReference>
<dbReference type="NCBIfam" id="NF006252">
    <property type="entry name" value="PRK08393.1"/>
    <property type="match status" value="1"/>
</dbReference>
<dbReference type="PANTHER" id="PTHR43794:SF11">
    <property type="entry name" value="AMIDOHYDROLASE-RELATED DOMAIN-CONTAINING PROTEIN"/>
    <property type="match status" value="1"/>
</dbReference>
<dbReference type="PANTHER" id="PTHR43794">
    <property type="entry name" value="AMINOHYDROLASE SSNA-RELATED"/>
    <property type="match status" value="1"/>
</dbReference>
<dbReference type="Pfam" id="PF01979">
    <property type="entry name" value="Amidohydro_1"/>
    <property type="match status" value="1"/>
</dbReference>
<dbReference type="SUPFAM" id="SSF51338">
    <property type="entry name" value="Composite domain of metallo-dependent hydrolases"/>
    <property type="match status" value="1"/>
</dbReference>
<dbReference type="SUPFAM" id="SSF51556">
    <property type="entry name" value="Metallo-dependent hydrolases"/>
    <property type="match status" value="1"/>
</dbReference>
<name>MTAD_PYRHO</name>
<proteinExistence type="inferred from homology"/>
<accession>O59184</accession>
<comment type="function">
    <text evidence="1">Catalyzes the deamination of 5-methylthioadenosine and S-adenosyl-L-homocysteine into 5-methylthioinosine and S-inosyl-L-homocysteine, respectively. Is also able to deaminate adenosine.</text>
</comment>
<comment type="catalytic activity">
    <reaction evidence="1">
        <text>S-adenosyl-L-homocysteine + H2O + H(+) = S-inosyl-L-homocysteine + NH4(+)</text>
        <dbReference type="Rhea" id="RHEA:20716"/>
        <dbReference type="ChEBI" id="CHEBI:15377"/>
        <dbReference type="ChEBI" id="CHEBI:15378"/>
        <dbReference type="ChEBI" id="CHEBI:28938"/>
        <dbReference type="ChEBI" id="CHEBI:57856"/>
        <dbReference type="ChEBI" id="CHEBI:57985"/>
        <dbReference type="EC" id="3.5.4.28"/>
    </reaction>
</comment>
<comment type="catalytic activity">
    <reaction evidence="1">
        <text>S-methyl-5'-thioadenosine + H2O + H(+) = S-methyl-5'-thioinosine + NH4(+)</text>
        <dbReference type="Rhea" id="RHEA:25025"/>
        <dbReference type="ChEBI" id="CHEBI:15377"/>
        <dbReference type="ChEBI" id="CHEBI:15378"/>
        <dbReference type="ChEBI" id="CHEBI:17509"/>
        <dbReference type="ChEBI" id="CHEBI:28938"/>
        <dbReference type="ChEBI" id="CHEBI:48595"/>
        <dbReference type="EC" id="3.5.4.31"/>
    </reaction>
</comment>
<comment type="cofactor">
    <cofactor evidence="1">
        <name>Zn(2+)</name>
        <dbReference type="ChEBI" id="CHEBI:29105"/>
    </cofactor>
    <text evidence="1">Binds 1 zinc ion per subunit.</text>
</comment>
<comment type="similarity">
    <text evidence="1">Belongs to the metallo-dependent hydrolases superfamily. MTA/SAH deaminase family.</text>
</comment>
<comment type="sequence caution" evidence="2">
    <conflict type="erroneous initiation">
        <sequence resource="EMBL-CDS" id="BAA30623"/>
    </conflict>
</comment>
<reference key="1">
    <citation type="journal article" date="1998" name="DNA Res.">
        <title>Complete sequence and gene organization of the genome of a hyper-thermophilic archaebacterium, Pyrococcus horikoshii OT3.</title>
        <authorList>
            <person name="Kawarabayasi Y."/>
            <person name="Sawada M."/>
            <person name="Horikawa H."/>
            <person name="Haikawa Y."/>
            <person name="Hino Y."/>
            <person name="Yamamoto S."/>
            <person name="Sekine M."/>
            <person name="Baba S."/>
            <person name="Kosugi H."/>
            <person name="Hosoyama A."/>
            <person name="Nagai Y."/>
            <person name="Sakai M."/>
            <person name="Ogura K."/>
            <person name="Otsuka R."/>
            <person name="Nakazawa H."/>
            <person name="Takamiya M."/>
            <person name="Ohfuku Y."/>
            <person name="Funahashi T."/>
            <person name="Tanaka T."/>
            <person name="Kudoh Y."/>
            <person name="Yamazaki J."/>
            <person name="Kushida N."/>
            <person name="Oguchi A."/>
            <person name="Aoki K."/>
            <person name="Yoshizawa T."/>
            <person name="Nakamura Y."/>
            <person name="Robb F.T."/>
            <person name="Horikoshi K."/>
            <person name="Masuchi Y."/>
            <person name="Shizuya H."/>
            <person name="Kikuchi H."/>
        </authorList>
    </citation>
    <scope>NUCLEOTIDE SEQUENCE [LARGE SCALE GENOMIC DNA]</scope>
    <source>
        <strain>ATCC 700860 / DSM 12428 / JCM 9974 / NBRC 100139 / OT-3</strain>
    </source>
</reference>
<keyword id="KW-0378">Hydrolase</keyword>
<keyword id="KW-0479">Metal-binding</keyword>
<keyword id="KW-0862">Zinc</keyword>
<gene>
    <name evidence="1" type="primary">mtaD</name>
    <name type="ordered locus">PH1515</name>
</gene>
<organism>
    <name type="scientific">Pyrococcus horikoshii (strain ATCC 700860 / DSM 12428 / JCM 9974 / NBRC 100139 / OT-3)</name>
    <dbReference type="NCBI Taxonomy" id="70601"/>
    <lineage>
        <taxon>Archaea</taxon>
        <taxon>Methanobacteriati</taxon>
        <taxon>Methanobacteriota</taxon>
        <taxon>Thermococci</taxon>
        <taxon>Thermococcales</taxon>
        <taxon>Thermococcaceae</taxon>
        <taxon>Pyrococcus</taxon>
    </lineage>
</organism>
<protein>
    <recommendedName>
        <fullName evidence="1">5-methylthioadenosine/S-adenosylhomocysteine deaminase</fullName>
        <shortName evidence="1">MTA/SAH deaminase</shortName>
        <ecNumber evidence="1">3.5.4.28</ecNumber>
        <ecNumber evidence="1">3.5.4.31</ecNumber>
    </recommendedName>
</protein>
<sequence length="421" mass="47111">MSILLKGGLILYDTSYHPTRADILIEGDKIVEVKRNINKAADEVIDASHSLIIPAFINAHTHSPMVIFRGLAEDVPLMDWLQNYIWPAERKLKRKEVYWGAKLALLEMVHSGISTFVDMYFYMEEVARATLEVGLRGFLGYGMVDLEDEEKRRKEIKETEKLHEFITKLNSKLVKFILAPHAPYTCSLDCLKWVAEKSREWDSLVTIHLAETRDEIKIMEEKYGRSPVEVLKEANLLNDKLIAAHGIWLSKKDLEMLASSNVTIAHCPASNMKLGSGIFPMRDAIDEDINVALGTDGAASNNTLDIIREMRLASLLQKVNTLNPAIVKSEEIFRMATINGAKALKLKAGIIKEGYIADIAVINLKRSHLLPLHNPLATLIFSAKAGDIDTLIVSGRVIMLDGEVLTIDEEKVIDKFLGVGI</sequence>
<evidence type="ECO:0000255" key="1">
    <source>
        <dbReference type="HAMAP-Rule" id="MF_01281"/>
    </source>
</evidence>
<evidence type="ECO:0000305" key="2"/>